<sequence>MSLPAETDMEDTKPSVVMVDNGDQAQFRFAEFSKNELALDEKSCKEAMDLFGETKHLLVANVLSMGNGTTEEAERNWFAFILYSIKKLAQKNEEIQKDEIENTGLTLCRILRAAKLNIAEFFKELPQFVVKAGPILSNLYGPDWENKLEAKEMHANTIHLKILSKYYKRVFEEFFVSTDANVENNSSVTNRVSEYHRFGWLLFLALRVHAFSRFKDLVTCTNGLISILAILIIHVPARFRSFNIHDSSRFVKKSANGVDLLASLCNLYNTSEDELRKTIEQANNLVADILKKKPCLASECETENLENFDRDGLTYFKDLMEESSLPSSLSVLENDYDHMTRNNGELDERLFINEDDSLLASGSLSRGSVSAGGVKRKIDLMTSPTKMITSPLSPHRSPASHANGIPSSATPMIAATPVSTAMTTAKWLRTVISPLPSKPSQELERFLTSCDKDITSDVIRRAQIILQAIFPSSPLGDRCVTGSLQSANLMDNIWAEQRRLEALKLYYRVLATMCRAEAQILGNNLTSLLTNERFHRCMLACSAELVLATHKTVTMLFPAVLERTGITAFDLSKVIESFIRYEESLPRELRRHLNSLEERLLESLVWEKGSSMYNSLAVARPALSVEINRLGLLAEPMRSLDEIAMDINFSCGGLPPVPSLPKPEPMSAQNGDPRSPKRPCTEHRNVLAERNSFTSPVKDRLLHLSNLKSKLLPPPLQSAFASPTKPNPGGGGETCAETGISVFFSKIVKLGAVRISGMVERLQLSQQIRENVYCLFQRILNQWTSLFFNRHIDQIILCCFYGVAKISQLNLTFREIIYNYRKQPQCKPEVFRSVFVDWSSARRNGSCKQRTGQEHIDIISFYNEVFIPSVKPLLVEIGPGGATTRNDRIPEANNKNDGHLAQCPGSPRISPFPSLPDMSPKKVSATHNVYVSPLRSSKMDALISHSSKSYYACVGESTHAYQSPSKDLTAINNRLNGNRKVRGPLNFDDVDVGLVSDSMVANSLYLQNGSSASSSGAPLKSEQPDS</sequence>
<reference key="1">
    <citation type="submission" date="1998-03" db="EMBL/GenBank/DDBJ databases">
        <title>PSRB1 encodes pea retinoblastoma-related protein that interacts with a plant D-type cyclin.</title>
        <authorList>
            <person name="Shimizu S."/>
            <person name="Mori H."/>
        </authorList>
    </citation>
    <scope>NUCLEOTIDE SEQUENCE [MRNA]</scope>
    <source>
        <tissue>Axillary bud</tissue>
    </source>
</reference>
<proteinExistence type="evidence at transcript level"/>
<keyword id="KW-0131">Cell cycle</keyword>
<keyword id="KW-0539">Nucleus</keyword>
<keyword id="KW-0678">Repressor</keyword>
<keyword id="KW-0804">Transcription</keyword>
<keyword id="KW-0805">Transcription regulation</keyword>
<evidence type="ECO:0000250" key="1"/>
<evidence type="ECO:0000256" key="2">
    <source>
        <dbReference type="SAM" id="MobiDB-lite"/>
    </source>
</evidence>
<evidence type="ECO:0000305" key="3"/>
<accession>Q9SLZ4</accession>
<gene>
    <name type="primary">RBR1</name>
</gene>
<name>RBR1_PEA</name>
<protein>
    <recommendedName>
        <fullName>Retinoblastoma-related protein 1</fullName>
        <shortName>PsRB1</shortName>
    </recommendedName>
</protein>
<dbReference type="EMBL" id="AB012024">
    <property type="protein sequence ID" value="BAA88690.1"/>
    <property type="molecule type" value="mRNA"/>
</dbReference>
<dbReference type="SMR" id="Q9SLZ4"/>
<dbReference type="GO" id="GO:0000785">
    <property type="term" value="C:chromatin"/>
    <property type="evidence" value="ECO:0007669"/>
    <property type="project" value="TreeGrafter"/>
</dbReference>
<dbReference type="GO" id="GO:0005634">
    <property type="term" value="C:nucleus"/>
    <property type="evidence" value="ECO:0007669"/>
    <property type="project" value="UniProtKB-SubCell"/>
</dbReference>
<dbReference type="GO" id="GO:0005667">
    <property type="term" value="C:transcription regulator complex"/>
    <property type="evidence" value="ECO:0007669"/>
    <property type="project" value="TreeGrafter"/>
</dbReference>
<dbReference type="GO" id="GO:0000977">
    <property type="term" value="F:RNA polymerase II transcription regulatory region sequence-specific DNA binding"/>
    <property type="evidence" value="ECO:0007669"/>
    <property type="project" value="TreeGrafter"/>
</dbReference>
<dbReference type="GO" id="GO:0030154">
    <property type="term" value="P:cell differentiation"/>
    <property type="evidence" value="ECO:0007669"/>
    <property type="project" value="TreeGrafter"/>
</dbReference>
<dbReference type="GO" id="GO:2000134">
    <property type="term" value="P:negative regulation of G1/S transition of mitotic cell cycle"/>
    <property type="evidence" value="ECO:0007669"/>
    <property type="project" value="TreeGrafter"/>
</dbReference>
<dbReference type="GO" id="GO:0006357">
    <property type="term" value="P:regulation of transcription by RNA polymerase II"/>
    <property type="evidence" value="ECO:0007669"/>
    <property type="project" value="InterPro"/>
</dbReference>
<dbReference type="FunFam" id="1.10.472.10:FF:000030">
    <property type="entry name" value="Retinoblastoma-related protein 1"/>
    <property type="match status" value="1"/>
</dbReference>
<dbReference type="FunFam" id="1.10.472.10:FF:000067">
    <property type="entry name" value="Retinoblastoma-related protein 1"/>
    <property type="match status" value="1"/>
</dbReference>
<dbReference type="FunFam" id="1.10.472.140:FF:000003">
    <property type="entry name" value="Retinoblastoma-related protein 1"/>
    <property type="match status" value="1"/>
</dbReference>
<dbReference type="Gene3D" id="1.10.472.140">
    <property type="match status" value="1"/>
</dbReference>
<dbReference type="Gene3D" id="1.10.472.10">
    <property type="entry name" value="Cyclin-like"/>
    <property type="match status" value="2"/>
</dbReference>
<dbReference type="InterPro" id="IPR036915">
    <property type="entry name" value="Cyclin-like_sf"/>
</dbReference>
<dbReference type="InterPro" id="IPR002720">
    <property type="entry name" value="RB_A"/>
</dbReference>
<dbReference type="InterPro" id="IPR002719">
    <property type="entry name" value="RB_B"/>
</dbReference>
<dbReference type="InterPro" id="IPR028309">
    <property type="entry name" value="RB_fam"/>
</dbReference>
<dbReference type="InterPro" id="IPR024599">
    <property type="entry name" value="RB_N"/>
</dbReference>
<dbReference type="PANTHER" id="PTHR13742:SF17">
    <property type="entry name" value="RE32990P-RELATED"/>
    <property type="match status" value="1"/>
</dbReference>
<dbReference type="PANTHER" id="PTHR13742">
    <property type="entry name" value="RETINOBLASTOMA-ASSOCIATED PROTEIN RB -RELATED"/>
    <property type="match status" value="1"/>
</dbReference>
<dbReference type="Pfam" id="PF11934">
    <property type="entry name" value="DUF3452"/>
    <property type="match status" value="1"/>
</dbReference>
<dbReference type="Pfam" id="PF01858">
    <property type="entry name" value="RB_A"/>
    <property type="match status" value="1"/>
</dbReference>
<dbReference type="Pfam" id="PF01857">
    <property type="entry name" value="RB_B"/>
    <property type="match status" value="1"/>
</dbReference>
<dbReference type="SMART" id="SM01367">
    <property type="entry name" value="DUF3452"/>
    <property type="match status" value="1"/>
</dbReference>
<dbReference type="SMART" id="SM01368">
    <property type="entry name" value="RB_A"/>
    <property type="match status" value="1"/>
</dbReference>
<dbReference type="SUPFAM" id="SSF47954">
    <property type="entry name" value="Cyclin-like"/>
    <property type="match status" value="2"/>
</dbReference>
<feature type="chain" id="PRO_0000380237" description="Retinoblastoma-related protein 1">
    <location>
        <begin position="1"/>
        <end position="1026"/>
    </location>
</feature>
<feature type="region of interest" description="Pocket" evidence="1">
    <location>
        <begin position="416"/>
        <end position="872"/>
    </location>
</feature>
<feature type="region of interest" description="Domain A" evidence="1">
    <location>
        <begin position="416"/>
        <end position="616"/>
    </location>
</feature>
<feature type="region of interest" description="Spacer" evidence="1">
    <location>
        <begin position="617"/>
        <end position="737"/>
    </location>
</feature>
<feature type="region of interest" description="Disordered" evidence="2">
    <location>
        <begin position="656"/>
        <end position="680"/>
    </location>
</feature>
<feature type="region of interest" description="Domain B" evidence="1">
    <location>
        <begin position="738"/>
        <end position="872"/>
    </location>
</feature>
<feature type="region of interest" description="Disordered" evidence="2">
    <location>
        <begin position="1007"/>
        <end position="1026"/>
    </location>
</feature>
<organism>
    <name type="scientific">Pisum sativum</name>
    <name type="common">Garden pea</name>
    <name type="synonym">Lathyrus oleraceus</name>
    <dbReference type="NCBI Taxonomy" id="3888"/>
    <lineage>
        <taxon>Eukaryota</taxon>
        <taxon>Viridiplantae</taxon>
        <taxon>Streptophyta</taxon>
        <taxon>Embryophyta</taxon>
        <taxon>Tracheophyta</taxon>
        <taxon>Spermatophyta</taxon>
        <taxon>Magnoliopsida</taxon>
        <taxon>eudicotyledons</taxon>
        <taxon>Gunneridae</taxon>
        <taxon>Pentapetalae</taxon>
        <taxon>rosids</taxon>
        <taxon>fabids</taxon>
        <taxon>Fabales</taxon>
        <taxon>Fabaceae</taxon>
        <taxon>Papilionoideae</taxon>
        <taxon>50 kb inversion clade</taxon>
        <taxon>NPAAA clade</taxon>
        <taxon>Hologalegina</taxon>
        <taxon>IRL clade</taxon>
        <taxon>Fabeae</taxon>
        <taxon>Pisum</taxon>
    </lineage>
</organism>
<comment type="function">
    <text evidence="1">Regulator of biological processes that recruits a histone deacetylase to control gene transcription. May play a role in the entry into mitosis, negatively regulating the cell proliferation. Formation of stable complexes with geminiviridae replication-associated proteins may create a cellular environment which favors viral DNA replication (By similarity).</text>
</comment>
<comment type="subcellular location">
    <subcellularLocation>
        <location evidence="1">Nucleus</location>
    </subcellularLocation>
</comment>
<comment type="similarity">
    <text evidence="3">Belongs to the retinoblastoma protein (RB) family.</text>
</comment>